<proteinExistence type="evidence at protein level"/>
<evidence type="ECO:0000250" key="1"/>
<evidence type="ECO:0000250" key="2">
    <source>
        <dbReference type="UniProtKB" id="Q9CZX7"/>
    </source>
</evidence>
<evidence type="ECO:0000255" key="3"/>
<evidence type="ECO:0000256" key="4">
    <source>
        <dbReference type="SAM" id="MobiDB-lite"/>
    </source>
</evidence>
<evidence type="ECO:0000269" key="5">
    <source>
    </source>
</evidence>
<evidence type="ECO:0000312" key="6">
    <source>
        <dbReference type="HGNC" id="HGNC:25452"/>
    </source>
</evidence>
<evidence type="ECO:0007744" key="7">
    <source>
    </source>
</evidence>
<name>PP4P2_HUMAN</name>
<organism>
    <name type="scientific">Homo sapiens</name>
    <name type="common">Human</name>
    <dbReference type="NCBI Taxonomy" id="9606"/>
    <lineage>
        <taxon>Eukaryota</taxon>
        <taxon>Metazoa</taxon>
        <taxon>Chordata</taxon>
        <taxon>Craniata</taxon>
        <taxon>Vertebrata</taxon>
        <taxon>Euteleostomi</taxon>
        <taxon>Mammalia</taxon>
        <taxon>Eutheria</taxon>
        <taxon>Euarchontoglires</taxon>
        <taxon>Primates</taxon>
        <taxon>Haplorrhini</taxon>
        <taxon>Catarrhini</taxon>
        <taxon>Hominidae</taxon>
        <taxon>Homo</taxon>
    </lineage>
</organism>
<reference key="1">
    <citation type="journal article" date="2004" name="Nat. Genet.">
        <title>Complete sequencing and characterization of 21,243 full-length human cDNAs.</title>
        <authorList>
            <person name="Ota T."/>
            <person name="Suzuki Y."/>
            <person name="Nishikawa T."/>
            <person name="Otsuki T."/>
            <person name="Sugiyama T."/>
            <person name="Irie R."/>
            <person name="Wakamatsu A."/>
            <person name="Hayashi K."/>
            <person name="Sato H."/>
            <person name="Nagai K."/>
            <person name="Kimura K."/>
            <person name="Makita H."/>
            <person name="Sekine M."/>
            <person name="Obayashi M."/>
            <person name="Nishi T."/>
            <person name="Shibahara T."/>
            <person name="Tanaka T."/>
            <person name="Ishii S."/>
            <person name="Yamamoto J."/>
            <person name="Saito K."/>
            <person name="Kawai Y."/>
            <person name="Isono Y."/>
            <person name="Nakamura Y."/>
            <person name="Nagahari K."/>
            <person name="Murakami K."/>
            <person name="Yasuda T."/>
            <person name="Iwayanagi T."/>
            <person name="Wagatsuma M."/>
            <person name="Shiratori A."/>
            <person name="Sudo H."/>
            <person name="Hosoiri T."/>
            <person name="Kaku Y."/>
            <person name="Kodaira H."/>
            <person name="Kondo H."/>
            <person name="Sugawara M."/>
            <person name="Takahashi M."/>
            <person name="Kanda K."/>
            <person name="Yokoi T."/>
            <person name="Furuya T."/>
            <person name="Kikkawa E."/>
            <person name="Omura Y."/>
            <person name="Abe K."/>
            <person name="Kamihara K."/>
            <person name="Katsuta N."/>
            <person name="Sato K."/>
            <person name="Tanikawa M."/>
            <person name="Yamazaki M."/>
            <person name="Ninomiya K."/>
            <person name="Ishibashi T."/>
            <person name="Yamashita H."/>
            <person name="Murakawa K."/>
            <person name="Fujimori K."/>
            <person name="Tanai H."/>
            <person name="Kimata M."/>
            <person name="Watanabe M."/>
            <person name="Hiraoka S."/>
            <person name="Chiba Y."/>
            <person name="Ishida S."/>
            <person name="Ono Y."/>
            <person name="Takiguchi S."/>
            <person name="Watanabe S."/>
            <person name="Yosida M."/>
            <person name="Hotuta T."/>
            <person name="Kusano J."/>
            <person name="Kanehori K."/>
            <person name="Takahashi-Fujii A."/>
            <person name="Hara H."/>
            <person name="Tanase T.-O."/>
            <person name="Nomura Y."/>
            <person name="Togiya S."/>
            <person name="Komai F."/>
            <person name="Hara R."/>
            <person name="Takeuchi K."/>
            <person name="Arita M."/>
            <person name="Imose N."/>
            <person name="Musashino K."/>
            <person name="Yuuki H."/>
            <person name="Oshima A."/>
            <person name="Sasaki N."/>
            <person name="Aotsuka S."/>
            <person name="Yoshikawa Y."/>
            <person name="Matsunawa H."/>
            <person name="Ichihara T."/>
            <person name="Shiohata N."/>
            <person name="Sano S."/>
            <person name="Moriya S."/>
            <person name="Momiyama H."/>
            <person name="Satoh N."/>
            <person name="Takami S."/>
            <person name="Terashima Y."/>
            <person name="Suzuki O."/>
            <person name="Nakagawa S."/>
            <person name="Senoh A."/>
            <person name="Mizoguchi H."/>
            <person name="Goto Y."/>
            <person name="Shimizu F."/>
            <person name="Wakebe H."/>
            <person name="Hishigaki H."/>
            <person name="Watanabe T."/>
            <person name="Sugiyama A."/>
            <person name="Takemoto M."/>
            <person name="Kawakami B."/>
            <person name="Yamazaki M."/>
            <person name="Watanabe K."/>
            <person name="Kumagai A."/>
            <person name="Itakura S."/>
            <person name="Fukuzumi Y."/>
            <person name="Fujimori Y."/>
            <person name="Komiyama M."/>
            <person name="Tashiro H."/>
            <person name="Tanigami A."/>
            <person name="Fujiwara T."/>
            <person name="Ono T."/>
            <person name="Yamada K."/>
            <person name="Fujii Y."/>
            <person name="Ozaki K."/>
            <person name="Hirao M."/>
            <person name="Ohmori Y."/>
            <person name="Kawabata A."/>
            <person name="Hikiji T."/>
            <person name="Kobatake N."/>
            <person name="Inagaki H."/>
            <person name="Ikema Y."/>
            <person name="Okamoto S."/>
            <person name="Okitani R."/>
            <person name="Kawakami T."/>
            <person name="Noguchi S."/>
            <person name="Itoh T."/>
            <person name="Shigeta K."/>
            <person name="Senba T."/>
            <person name="Matsumura K."/>
            <person name="Nakajima Y."/>
            <person name="Mizuno T."/>
            <person name="Morinaga M."/>
            <person name="Sasaki M."/>
            <person name="Togashi T."/>
            <person name="Oyama M."/>
            <person name="Hata H."/>
            <person name="Watanabe M."/>
            <person name="Komatsu T."/>
            <person name="Mizushima-Sugano J."/>
            <person name="Satoh T."/>
            <person name="Shirai Y."/>
            <person name="Takahashi Y."/>
            <person name="Nakagawa K."/>
            <person name="Okumura K."/>
            <person name="Nagase T."/>
            <person name="Nomura N."/>
            <person name="Kikuchi H."/>
            <person name="Masuho Y."/>
            <person name="Yamashita R."/>
            <person name="Nakai K."/>
            <person name="Yada T."/>
            <person name="Nakamura Y."/>
            <person name="Ohara O."/>
            <person name="Isogai T."/>
            <person name="Sugano S."/>
        </authorList>
    </citation>
    <scope>NUCLEOTIDE SEQUENCE [LARGE SCALE MRNA]</scope>
    <source>
        <tissue>Kidney</tissue>
    </source>
</reference>
<reference key="2">
    <citation type="submission" date="2005-07" db="EMBL/GenBank/DDBJ databases">
        <authorList>
            <person name="Mural R.J."/>
            <person name="Istrail S."/>
            <person name="Sutton G.G."/>
            <person name="Florea L."/>
            <person name="Halpern A.L."/>
            <person name="Mobarry C.M."/>
            <person name="Lippert R."/>
            <person name="Walenz B."/>
            <person name="Shatkay H."/>
            <person name="Dew I."/>
            <person name="Miller J.R."/>
            <person name="Flanigan M.J."/>
            <person name="Edwards N.J."/>
            <person name="Bolanos R."/>
            <person name="Fasulo D."/>
            <person name="Halldorsson B.V."/>
            <person name="Hannenhalli S."/>
            <person name="Turner R."/>
            <person name="Yooseph S."/>
            <person name="Lu F."/>
            <person name="Nusskern D.R."/>
            <person name="Shue B.C."/>
            <person name="Zheng X.H."/>
            <person name="Zhong F."/>
            <person name="Delcher A.L."/>
            <person name="Huson D.H."/>
            <person name="Kravitz S.A."/>
            <person name="Mouchard L."/>
            <person name="Reinert K."/>
            <person name="Remington K.A."/>
            <person name="Clark A.G."/>
            <person name="Waterman M.S."/>
            <person name="Eichler E.E."/>
            <person name="Adams M.D."/>
            <person name="Hunkapiller M.W."/>
            <person name="Myers E.W."/>
            <person name="Venter J.C."/>
        </authorList>
    </citation>
    <scope>NUCLEOTIDE SEQUENCE [LARGE SCALE GENOMIC DNA]</scope>
</reference>
<reference key="3">
    <citation type="journal article" date="2004" name="Genome Res.">
        <title>The status, quality, and expansion of the NIH full-length cDNA project: the Mammalian Gene Collection (MGC).</title>
        <authorList>
            <consortium name="The MGC Project Team"/>
        </authorList>
    </citation>
    <scope>NUCLEOTIDE SEQUENCE [LARGE SCALE MRNA]</scope>
    <source>
        <tissue>Brain</tissue>
    </source>
</reference>
<reference key="4">
    <citation type="journal article" date="2007" name="BMC Genomics">
        <title>The full-ORF clone resource of the German cDNA consortium.</title>
        <authorList>
            <person name="Bechtel S."/>
            <person name="Rosenfelder H."/>
            <person name="Duda A."/>
            <person name="Schmidt C.P."/>
            <person name="Ernst U."/>
            <person name="Wellenreuther R."/>
            <person name="Mehrle A."/>
            <person name="Schuster C."/>
            <person name="Bahr A."/>
            <person name="Bloecker H."/>
            <person name="Heubner D."/>
            <person name="Hoerlein A."/>
            <person name="Michel G."/>
            <person name="Wedler H."/>
            <person name="Koehrer K."/>
            <person name="Ottenwaelder B."/>
            <person name="Poustka A."/>
            <person name="Wiemann S."/>
            <person name="Schupp I."/>
        </authorList>
    </citation>
    <scope>NUCLEOTIDE SEQUENCE [LARGE SCALE MRNA]</scope>
    <source>
        <tissue>Melanoma</tissue>
    </source>
</reference>
<reference key="5">
    <citation type="journal article" date="2005" name="Proc. Natl. Acad. Sci. U.S.A.">
        <title>The identification and characterization of two phosphatidylinositol-4,5-bisphosphate 4-phosphatases.</title>
        <authorList>
            <person name="Ungewickell A."/>
            <person name="Hugge C."/>
            <person name="Kisseleva M."/>
            <person name="Chang S.-C."/>
            <person name="Zou J."/>
            <person name="Feng Y."/>
            <person name="Galyov E.E."/>
            <person name="Wilson M."/>
            <person name="Majerus P.W."/>
        </authorList>
    </citation>
    <scope>FUNCTION</scope>
    <scope>SUBCELLULAR LOCATION</scope>
    <scope>TISSUE SPECIFICITY</scope>
    <scope>CATALYTIC ACTIVITY</scope>
</reference>
<reference key="6">
    <citation type="journal article" date="2009" name="Sci. Signal.">
        <title>Quantitative phosphoproteomic analysis of T cell receptor signaling reveals system-wide modulation of protein-protein interactions.</title>
        <authorList>
            <person name="Mayya V."/>
            <person name="Lundgren D.H."/>
            <person name="Hwang S.-I."/>
            <person name="Rezaul K."/>
            <person name="Wu L."/>
            <person name="Eng J.K."/>
            <person name="Rodionov V."/>
            <person name="Han D.K."/>
        </authorList>
    </citation>
    <scope>IDENTIFICATION BY MASS SPECTROMETRY [LARGE SCALE ANALYSIS]</scope>
    <source>
        <tissue>Leukemic T-cell</tissue>
    </source>
</reference>
<reference key="7">
    <citation type="journal article" date="2013" name="J. Proteome Res.">
        <title>Toward a comprehensive characterization of a human cancer cell phosphoproteome.</title>
        <authorList>
            <person name="Zhou H."/>
            <person name="Di Palma S."/>
            <person name="Preisinger C."/>
            <person name="Peng M."/>
            <person name="Polat A.N."/>
            <person name="Heck A.J."/>
            <person name="Mohammed S."/>
        </authorList>
    </citation>
    <scope>PHOSPHORYLATION [LARGE SCALE ANALYSIS] AT THR-22</scope>
    <scope>IDENTIFICATION BY MASS SPECTROMETRY [LARGE SCALE ANALYSIS]</scope>
    <source>
        <tissue>Erythroleukemia</tissue>
    </source>
</reference>
<reference key="8">
    <citation type="journal article" date="2014" name="J. Proteomics">
        <title>An enzyme assisted RP-RPLC approach for in-depth analysis of human liver phosphoproteome.</title>
        <authorList>
            <person name="Bian Y."/>
            <person name="Song C."/>
            <person name="Cheng K."/>
            <person name="Dong M."/>
            <person name="Wang F."/>
            <person name="Huang J."/>
            <person name="Sun D."/>
            <person name="Wang L."/>
            <person name="Ye M."/>
            <person name="Zou H."/>
        </authorList>
    </citation>
    <scope>IDENTIFICATION BY MASS SPECTROMETRY [LARGE SCALE ANALYSIS]</scope>
    <source>
        <tissue>Liver</tissue>
    </source>
</reference>
<dbReference type="EC" id="3.1.3.78" evidence="5"/>
<dbReference type="EMBL" id="AK313783">
    <property type="protein sequence ID" value="BAG36521.1"/>
    <property type="molecule type" value="mRNA"/>
</dbReference>
<dbReference type="EMBL" id="CH471060">
    <property type="protein sequence ID" value="EAW91672.1"/>
    <property type="molecule type" value="Genomic_DNA"/>
</dbReference>
<dbReference type="EMBL" id="BC033892">
    <property type="protein sequence ID" value="AAH33892.1"/>
    <property type="molecule type" value="mRNA"/>
</dbReference>
<dbReference type="EMBL" id="CR749733">
    <property type="protein sequence ID" value="CAH18492.1"/>
    <property type="molecule type" value="mRNA"/>
</dbReference>
<dbReference type="CCDS" id="CCDS6252.1"/>
<dbReference type="RefSeq" id="NP_061180.1">
    <property type="nucleotide sequence ID" value="NM_018710.3"/>
</dbReference>
<dbReference type="SMR" id="Q8N4L2"/>
<dbReference type="BioGRID" id="120700">
    <property type="interactions" value="48"/>
</dbReference>
<dbReference type="FunCoup" id="Q8N4L2">
    <property type="interactions" value="1928"/>
</dbReference>
<dbReference type="IntAct" id="Q8N4L2">
    <property type="interactions" value="44"/>
</dbReference>
<dbReference type="MINT" id="Q8N4L2"/>
<dbReference type="STRING" id="9606.ENSP00000285419"/>
<dbReference type="SwissLipids" id="SLP:000000851"/>
<dbReference type="DEPOD" id="PIP4P2"/>
<dbReference type="GlyGen" id="Q8N4L2">
    <property type="glycosylation" value="1 site"/>
</dbReference>
<dbReference type="iPTMnet" id="Q8N4L2"/>
<dbReference type="PhosphoSitePlus" id="Q8N4L2"/>
<dbReference type="SwissPalm" id="Q8N4L2"/>
<dbReference type="BioMuta" id="PIP4P2"/>
<dbReference type="DMDM" id="74728868"/>
<dbReference type="jPOST" id="Q8N4L2"/>
<dbReference type="MassIVE" id="Q8N4L2"/>
<dbReference type="PaxDb" id="9606-ENSP00000285419"/>
<dbReference type="PeptideAtlas" id="Q8N4L2"/>
<dbReference type="ProteomicsDB" id="71939"/>
<dbReference type="Pumba" id="Q8N4L2"/>
<dbReference type="Antibodypedia" id="3026">
    <property type="antibodies" value="41 antibodies from 13 providers"/>
</dbReference>
<dbReference type="DNASU" id="55529"/>
<dbReference type="Ensembl" id="ENST00000285419.8">
    <property type="protein sequence ID" value="ENSP00000285419.3"/>
    <property type="gene ID" value="ENSG00000155099.8"/>
</dbReference>
<dbReference type="GeneID" id="55529"/>
<dbReference type="KEGG" id="hsa:55529"/>
<dbReference type="MANE-Select" id="ENST00000285419.8">
    <property type="protein sequence ID" value="ENSP00000285419.3"/>
    <property type="RefSeq nucleotide sequence ID" value="NM_018710.3"/>
    <property type="RefSeq protein sequence ID" value="NP_061180.1"/>
</dbReference>
<dbReference type="UCSC" id="uc003yes.5">
    <property type="organism name" value="human"/>
</dbReference>
<dbReference type="AGR" id="HGNC:25452"/>
<dbReference type="CTD" id="55529"/>
<dbReference type="DisGeNET" id="55529"/>
<dbReference type="GeneCards" id="PIP4P2"/>
<dbReference type="HGNC" id="HGNC:25452">
    <property type="gene designation" value="PIP4P2"/>
</dbReference>
<dbReference type="HPA" id="ENSG00000155099">
    <property type="expression patterns" value="Low tissue specificity"/>
</dbReference>
<dbReference type="MIM" id="609864">
    <property type="type" value="gene"/>
</dbReference>
<dbReference type="neXtProt" id="NX_Q8N4L2"/>
<dbReference type="OpenTargets" id="ENSG00000155099"/>
<dbReference type="PharmGKB" id="PA142670771"/>
<dbReference type="VEuPathDB" id="HostDB:ENSG00000155099"/>
<dbReference type="eggNOG" id="KOG4684">
    <property type="taxonomic scope" value="Eukaryota"/>
</dbReference>
<dbReference type="GeneTree" id="ENSGT00390000003680"/>
<dbReference type="InParanoid" id="Q8N4L2"/>
<dbReference type="OMA" id="ATYISWA"/>
<dbReference type="OrthoDB" id="9939933at2759"/>
<dbReference type="PAN-GO" id="Q8N4L2">
    <property type="GO annotations" value="6 GO annotations based on evolutionary models"/>
</dbReference>
<dbReference type="PhylomeDB" id="Q8N4L2"/>
<dbReference type="TreeFam" id="TF316367"/>
<dbReference type="BioCyc" id="MetaCyc:HS14553-MONOMER"/>
<dbReference type="BRENDA" id="3.1.3.78">
    <property type="organism ID" value="2681"/>
</dbReference>
<dbReference type="PathwayCommons" id="Q8N4L2"/>
<dbReference type="SignaLink" id="Q8N4L2"/>
<dbReference type="BioGRID-ORCS" id="55529">
    <property type="hits" value="13 hits in 1166 CRISPR screens"/>
</dbReference>
<dbReference type="ChiTaRS" id="TMEM55A">
    <property type="organism name" value="human"/>
</dbReference>
<dbReference type="GenomeRNAi" id="55529"/>
<dbReference type="Pharos" id="Q8N4L2">
    <property type="development level" value="Tbio"/>
</dbReference>
<dbReference type="PRO" id="PR:Q8N4L2"/>
<dbReference type="Proteomes" id="UP000005640">
    <property type="component" value="Chromosome 8"/>
</dbReference>
<dbReference type="RNAct" id="Q8N4L2">
    <property type="molecule type" value="protein"/>
</dbReference>
<dbReference type="Bgee" id="ENSG00000155099">
    <property type="expression patterns" value="Expressed in pigmented layer of retina and 180 other cell types or tissues"/>
</dbReference>
<dbReference type="ExpressionAtlas" id="Q8N4L2">
    <property type="expression patterns" value="baseline and differential"/>
</dbReference>
<dbReference type="GO" id="GO:0031902">
    <property type="term" value="C:late endosome membrane"/>
    <property type="evidence" value="ECO:0000314"/>
    <property type="project" value="FlyBase"/>
</dbReference>
<dbReference type="GO" id="GO:0005765">
    <property type="term" value="C:lysosomal membrane"/>
    <property type="evidence" value="ECO:0000314"/>
    <property type="project" value="FlyBase"/>
</dbReference>
<dbReference type="GO" id="GO:0030670">
    <property type="term" value="C:phagocytic vesicle membrane"/>
    <property type="evidence" value="ECO:0000250"/>
    <property type="project" value="UniProtKB"/>
</dbReference>
<dbReference type="GO" id="GO:0005886">
    <property type="term" value="C:plasma membrane"/>
    <property type="evidence" value="ECO:0000250"/>
    <property type="project" value="UniProtKB"/>
</dbReference>
<dbReference type="GO" id="GO:0034597">
    <property type="term" value="F:phosphatidylinositol-4,5-bisphosphate 4-phosphatase activity"/>
    <property type="evidence" value="ECO:0000314"/>
    <property type="project" value="FlyBase"/>
</dbReference>
<dbReference type="GO" id="GO:0050765">
    <property type="term" value="P:negative regulation of phagocytosis"/>
    <property type="evidence" value="ECO:0000250"/>
    <property type="project" value="UniProtKB"/>
</dbReference>
<dbReference type="GO" id="GO:0046856">
    <property type="term" value="P:phosphatidylinositol dephosphorylation"/>
    <property type="evidence" value="ECO:0000314"/>
    <property type="project" value="FlyBase"/>
</dbReference>
<dbReference type="InterPro" id="IPR019178">
    <property type="entry name" value="PtdIns-P2-Ptase"/>
</dbReference>
<dbReference type="PANTHER" id="PTHR21014">
    <property type="entry name" value="PHOSPHATIDYLINOSITOL-4,5-BISPHOSPHATE 4-PHOSPHATASE"/>
    <property type="match status" value="1"/>
</dbReference>
<dbReference type="PANTHER" id="PTHR21014:SF5">
    <property type="entry name" value="TYPE 2 PHOSPHATIDYLINOSITOL 4,5-BISPHOSPHATE 4-PHOSPHATASE"/>
    <property type="match status" value="1"/>
</dbReference>
<dbReference type="Pfam" id="PF09788">
    <property type="entry name" value="Tmemb_55A"/>
    <property type="match status" value="1"/>
</dbReference>
<feature type="chain" id="PRO_0000235228" description="Type 2 phosphatidylinositol 4,5-bisphosphate 4-phosphatase">
    <location>
        <begin position="1"/>
        <end position="257"/>
    </location>
</feature>
<feature type="transmembrane region" description="Helical" evidence="3">
    <location>
        <begin position="192"/>
        <end position="212"/>
    </location>
</feature>
<feature type="transmembrane region" description="Helical" evidence="3">
    <location>
        <begin position="227"/>
        <end position="247"/>
    </location>
</feature>
<feature type="region of interest" description="Disordered" evidence="4">
    <location>
        <begin position="1"/>
        <end position="43"/>
    </location>
</feature>
<feature type="short sequence motif" description="CX5R motif">
    <location>
        <begin position="107"/>
        <end position="113"/>
    </location>
</feature>
<feature type="compositionally biased region" description="Basic and acidic residues" evidence="4">
    <location>
        <begin position="1"/>
        <end position="10"/>
    </location>
</feature>
<feature type="compositionally biased region" description="Polar residues" evidence="4">
    <location>
        <begin position="13"/>
        <end position="23"/>
    </location>
</feature>
<feature type="active site" evidence="1">
    <location>
        <position position="107"/>
    </location>
</feature>
<feature type="modified residue" description="Phosphothreonine" evidence="7">
    <location>
        <position position="22"/>
    </location>
</feature>
<feature type="modified residue" description="Phosphoserine" evidence="2">
    <location>
        <position position="33"/>
    </location>
</feature>
<accession>Q8N4L2</accession>
<accession>B2R9H4</accession>
<accession>Q68CU2</accession>
<sequence>MAADGVDERSPLLSASHSGNVTPTAPPYLQESSPRAELPPPYTAIASPDASGIPVINCRVCQSLINLDGKLHQHVVKCTVCNEATPIKNPPTGKKYVRCPCNCLLICKDTSRRIGCPRPNCRRIINLGPVMLISEEQPAQPALPIQPEGTRVVCGHCGNTFLWMELRFNTLAKCPHCKKISSVGSALPRRRCCAYITIGMICIFIGVGLTVGTPDFARRFRATYVSWAIAYLLGLICLIRACYWGAIRVSYPEHSFA</sequence>
<comment type="function">
    <text evidence="2 5">Catalyzes the hydrolysis of phosphatidylinositol-4,5-bisphosphate (PtdIns-4,5-P2) to phosphatidylinositol-4-phosphate (PtdIns-4-P) (PubMed:16365287). Does not hydrolyze phosphatidylinositol 3,4,5-trisphosphate, phosphatidylinositol 3,4-bisphosphate, inositol 3,5-bisphosphate, inositol 3,4-bisphosphate, phosphatidylinositol 5-monophosphate, phosphatidylinositol 4-monophosphate and phosphatidylinositol 3-monophosphate (PubMed:16365287). Negatively regulates the phagocytosis of large particles by reducing phagosomal phosphatidylinositol 4,5-bisphosphate accumulation during cup formation (By similarity).</text>
</comment>
<comment type="catalytic activity">
    <reaction evidence="5">
        <text>a 1,2-diacyl-sn-glycero-3-phospho-(1D-myo-inositol-4,5-bisphosphate) + H2O = a 1,2-diacyl-sn-glycero-3-phospho-(1D-myo-inositol-5-phosphate) + phosphate</text>
        <dbReference type="Rhea" id="RHEA:25674"/>
        <dbReference type="ChEBI" id="CHEBI:15377"/>
        <dbReference type="ChEBI" id="CHEBI:43474"/>
        <dbReference type="ChEBI" id="CHEBI:57795"/>
        <dbReference type="ChEBI" id="CHEBI:58456"/>
        <dbReference type="EC" id="3.1.3.78"/>
    </reaction>
</comment>
<comment type="interaction">
    <interactant intactId="EBI-2820617">
        <id>Q8N4L2</id>
    </interactant>
    <interactant intactId="EBI-726944">
        <id>P46934</id>
        <label>NEDD4</label>
    </interactant>
    <organismsDiffer>false</organismsDiffer>
    <experiments>2</experiments>
</comment>
<comment type="interaction">
    <interactant intactId="EBI-2820617">
        <id>Q8N4L2</id>
    </interactant>
    <interactant intactId="EBI-18159983">
        <id>Q3KNW5</id>
        <label>SLC10A6</label>
    </interactant>
    <organismsDiffer>false</organismsDiffer>
    <experiments>3</experiments>
</comment>
<comment type="interaction">
    <interactant intactId="EBI-2820617">
        <id>Q8N4L2</id>
    </interactant>
    <interactant intactId="EBI-359977">
        <id>P01375</id>
        <label>TNF</label>
    </interactant>
    <organismsDiffer>false</organismsDiffer>
    <experiments>3</experiments>
</comment>
<comment type="interaction">
    <interactant intactId="EBI-2820617">
        <id>Q8N4L2</id>
    </interactant>
    <interactant intactId="EBI-3892947">
        <id>Q5T4F4</id>
        <label>ZFYVE27</label>
    </interactant>
    <organismsDiffer>false</organismsDiffer>
    <experiments>3</experiments>
</comment>
<comment type="subcellular location">
    <subcellularLocation>
        <location evidence="5">Late endosome membrane</location>
        <topology evidence="3">Multi-pass membrane protein</topology>
    </subcellularLocation>
    <subcellularLocation>
        <location evidence="5">Lysosome membrane</location>
        <topology evidence="3">Multi-pass membrane protein</topology>
    </subcellularLocation>
    <subcellularLocation>
        <location evidence="2">Cytoplasmic vesicle</location>
        <location evidence="2">Phagosome membrane</location>
        <topology evidence="3">Multi-pass membrane protein</topology>
    </subcellularLocation>
    <subcellularLocation>
        <location evidence="2">Cell membrane</location>
        <topology evidence="3">Multi-pass membrane protein</topology>
    </subcellularLocation>
</comment>
<comment type="tissue specificity">
    <text evidence="5">Ubiquitous.</text>
</comment>
<gene>
    <name evidence="6" type="primary">PIP4P2</name>
    <name evidence="6" type="synonym">TMEM55A</name>
</gene>
<protein>
    <recommendedName>
        <fullName>Type 2 phosphatidylinositol 4,5-bisphosphate 4-phosphatase</fullName>
        <shortName>Type 2 PtdIns-4,5-P2 4-Ptase</shortName>
        <ecNumber evidence="5">3.1.3.78</ecNumber>
    </recommendedName>
    <alternativeName>
        <fullName>PtdIns-4,5-P2 4-Ptase II</fullName>
    </alternativeName>
    <alternativeName>
        <fullName>Transmembrane protein 55A</fullName>
    </alternativeName>
</protein>
<keyword id="KW-1003">Cell membrane</keyword>
<keyword id="KW-0968">Cytoplasmic vesicle</keyword>
<keyword id="KW-0967">Endosome</keyword>
<keyword id="KW-0378">Hydrolase</keyword>
<keyword id="KW-0443">Lipid metabolism</keyword>
<keyword id="KW-0458">Lysosome</keyword>
<keyword id="KW-0472">Membrane</keyword>
<keyword id="KW-0597">Phosphoprotein</keyword>
<keyword id="KW-1267">Proteomics identification</keyword>
<keyword id="KW-1185">Reference proteome</keyword>
<keyword id="KW-0812">Transmembrane</keyword>
<keyword id="KW-1133">Transmembrane helix</keyword>